<reference key="1">
    <citation type="submission" date="2006-06" db="EMBL/GenBank/DDBJ databases">
        <title>Complete sequence of chromosome of Mesorhizobium sp. BNC1.</title>
        <authorList>
            <consortium name="US DOE Joint Genome Institute"/>
            <person name="Copeland A."/>
            <person name="Lucas S."/>
            <person name="Lapidus A."/>
            <person name="Barry K."/>
            <person name="Detter J.C."/>
            <person name="Glavina del Rio T."/>
            <person name="Hammon N."/>
            <person name="Israni S."/>
            <person name="Dalin E."/>
            <person name="Tice H."/>
            <person name="Pitluck S."/>
            <person name="Chertkov O."/>
            <person name="Brettin T."/>
            <person name="Bruce D."/>
            <person name="Han C."/>
            <person name="Tapia R."/>
            <person name="Gilna P."/>
            <person name="Schmutz J."/>
            <person name="Larimer F."/>
            <person name="Land M."/>
            <person name="Hauser L."/>
            <person name="Kyrpides N."/>
            <person name="Mikhailova N."/>
            <person name="Richardson P."/>
        </authorList>
    </citation>
    <scope>NUCLEOTIDE SEQUENCE [LARGE SCALE GENOMIC DNA]</scope>
    <source>
        <strain>BNC1</strain>
    </source>
</reference>
<feature type="chain" id="PRO_1000007516" description="Large ribosomal subunit protein uL29">
    <location>
        <begin position="1"/>
        <end position="66"/>
    </location>
</feature>
<gene>
    <name evidence="1" type="primary">rpmC</name>
    <name type="ordered locus">Meso_1670</name>
</gene>
<name>RL29_CHESB</name>
<keyword id="KW-0687">Ribonucleoprotein</keyword>
<keyword id="KW-0689">Ribosomal protein</keyword>
<accession>Q11HR0</accession>
<comment type="similarity">
    <text evidence="1">Belongs to the universal ribosomal protein uL29 family.</text>
</comment>
<dbReference type="EMBL" id="CP000390">
    <property type="protein sequence ID" value="ABG63065.1"/>
    <property type="molecule type" value="Genomic_DNA"/>
</dbReference>
<dbReference type="SMR" id="Q11HR0"/>
<dbReference type="STRING" id="266779.Meso_1670"/>
<dbReference type="KEGG" id="mes:Meso_1670"/>
<dbReference type="eggNOG" id="COG0255">
    <property type="taxonomic scope" value="Bacteria"/>
</dbReference>
<dbReference type="HOGENOM" id="CLU_158491_1_0_5"/>
<dbReference type="OrthoDB" id="9815192at2"/>
<dbReference type="GO" id="GO:0022625">
    <property type="term" value="C:cytosolic large ribosomal subunit"/>
    <property type="evidence" value="ECO:0007669"/>
    <property type="project" value="TreeGrafter"/>
</dbReference>
<dbReference type="GO" id="GO:0003735">
    <property type="term" value="F:structural constituent of ribosome"/>
    <property type="evidence" value="ECO:0007669"/>
    <property type="project" value="InterPro"/>
</dbReference>
<dbReference type="GO" id="GO:0006412">
    <property type="term" value="P:translation"/>
    <property type="evidence" value="ECO:0007669"/>
    <property type="project" value="UniProtKB-UniRule"/>
</dbReference>
<dbReference type="CDD" id="cd00427">
    <property type="entry name" value="Ribosomal_L29_HIP"/>
    <property type="match status" value="1"/>
</dbReference>
<dbReference type="FunFam" id="1.10.287.310:FF:000001">
    <property type="entry name" value="50S ribosomal protein L29"/>
    <property type="match status" value="1"/>
</dbReference>
<dbReference type="Gene3D" id="1.10.287.310">
    <property type="match status" value="1"/>
</dbReference>
<dbReference type="HAMAP" id="MF_00374">
    <property type="entry name" value="Ribosomal_uL29"/>
    <property type="match status" value="1"/>
</dbReference>
<dbReference type="InterPro" id="IPR050063">
    <property type="entry name" value="Ribosomal_protein_uL29"/>
</dbReference>
<dbReference type="InterPro" id="IPR001854">
    <property type="entry name" value="Ribosomal_uL29"/>
</dbReference>
<dbReference type="InterPro" id="IPR018254">
    <property type="entry name" value="Ribosomal_uL29_CS"/>
</dbReference>
<dbReference type="InterPro" id="IPR036049">
    <property type="entry name" value="Ribosomal_uL29_sf"/>
</dbReference>
<dbReference type="NCBIfam" id="TIGR00012">
    <property type="entry name" value="L29"/>
    <property type="match status" value="1"/>
</dbReference>
<dbReference type="PANTHER" id="PTHR10916">
    <property type="entry name" value="60S RIBOSOMAL PROTEIN L35/50S RIBOSOMAL PROTEIN L29"/>
    <property type="match status" value="1"/>
</dbReference>
<dbReference type="PANTHER" id="PTHR10916:SF0">
    <property type="entry name" value="LARGE RIBOSOMAL SUBUNIT PROTEIN UL29C"/>
    <property type="match status" value="1"/>
</dbReference>
<dbReference type="Pfam" id="PF00831">
    <property type="entry name" value="Ribosomal_L29"/>
    <property type="match status" value="1"/>
</dbReference>
<dbReference type="SUPFAM" id="SSF46561">
    <property type="entry name" value="Ribosomal protein L29 (L29p)"/>
    <property type="match status" value="1"/>
</dbReference>
<dbReference type="PROSITE" id="PS00579">
    <property type="entry name" value="RIBOSOMAL_L29"/>
    <property type="match status" value="1"/>
</dbReference>
<evidence type="ECO:0000255" key="1">
    <source>
        <dbReference type="HAMAP-Rule" id="MF_00374"/>
    </source>
</evidence>
<evidence type="ECO:0000305" key="2"/>
<sequence>MKAADVRAMTTDQLDDELANLKKEQFNLRFQKATGQLEKTARVKQIRRDIARIKTIAAEKSAGKKA</sequence>
<organism>
    <name type="scientific">Chelativorans sp. (strain BNC1)</name>
    <dbReference type="NCBI Taxonomy" id="266779"/>
    <lineage>
        <taxon>Bacteria</taxon>
        <taxon>Pseudomonadati</taxon>
        <taxon>Pseudomonadota</taxon>
        <taxon>Alphaproteobacteria</taxon>
        <taxon>Hyphomicrobiales</taxon>
        <taxon>Phyllobacteriaceae</taxon>
        <taxon>Chelativorans</taxon>
    </lineage>
</organism>
<proteinExistence type="inferred from homology"/>
<protein>
    <recommendedName>
        <fullName evidence="1">Large ribosomal subunit protein uL29</fullName>
    </recommendedName>
    <alternativeName>
        <fullName evidence="2">50S ribosomal protein L29</fullName>
    </alternativeName>
</protein>